<feature type="chain" id="PRO_0000225038" description="UDP-N-acetylglucosamine--N-acetylmuramyl-(pentapeptide) pyrophosphoryl-undecaprenol N-acetylglucosamine transferase">
    <location>
        <begin position="1"/>
        <end position="367"/>
    </location>
</feature>
<feature type="binding site" evidence="1">
    <location>
        <begin position="15"/>
        <end position="17"/>
    </location>
    <ligand>
        <name>UDP-N-acetyl-alpha-D-glucosamine</name>
        <dbReference type="ChEBI" id="CHEBI:57705"/>
    </ligand>
</feature>
<feature type="binding site" evidence="1">
    <location>
        <position position="127"/>
    </location>
    <ligand>
        <name>UDP-N-acetyl-alpha-D-glucosamine</name>
        <dbReference type="ChEBI" id="CHEBI:57705"/>
    </ligand>
</feature>
<feature type="binding site" evidence="1">
    <location>
        <position position="163"/>
    </location>
    <ligand>
        <name>UDP-N-acetyl-alpha-D-glucosamine</name>
        <dbReference type="ChEBI" id="CHEBI:57705"/>
    </ligand>
</feature>
<feature type="binding site" evidence="1">
    <location>
        <position position="191"/>
    </location>
    <ligand>
        <name>UDP-N-acetyl-alpha-D-glucosamine</name>
        <dbReference type="ChEBI" id="CHEBI:57705"/>
    </ligand>
</feature>
<feature type="binding site" evidence="1">
    <location>
        <position position="249"/>
    </location>
    <ligand>
        <name>UDP-N-acetyl-alpha-D-glucosamine</name>
        <dbReference type="ChEBI" id="CHEBI:57705"/>
    </ligand>
</feature>
<feature type="binding site" evidence="1">
    <location>
        <position position="294"/>
    </location>
    <ligand>
        <name>UDP-N-acetyl-alpha-D-glucosamine</name>
        <dbReference type="ChEBI" id="CHEBI:57705"/>
    </ligand>
</feature>
<name>MURG_BURP1</name>
<organism>
    <name type="scientific">Burkholderia pseudomallei (strain 1710b)</name>
    <dbReference type="NCBI Taxonomy" id="320372"/>
    <lineage>
        <taxon>Bacteria</taxon>
        <taxon>Pseudomonadati</taxon>
        <taxon>Pseudomonadota</taxon>
        <taxon>Betaproteobacteria</taxon>
        <taxon>Burkholderiales</taxon>
        <taxon>Burkholderiaceae</taxon>
        <taxon>Burkholderia</taxon>
        <taxon>pseudomallei group</taxon>
    </lineage>
</organism>
<reference key="1">
    <citation type="journal article" date="2010" name="Genome Biol. Evol.">
        <title>Continuing evolution of Burkholderia mallei through genome reduction and large-scale rearrangements.</title>
        <authorList>
            <person name="Losada L."/>
            <person name="Ronning C.M."/>
            <person name="DeShazer D."/>
            <person name="Woods D."/>
            <person name="Fedorova N."/>
            <person name="Kim H.S."/>
            <person name="Shabalina S.A."/>
            <person name="Pearson T.R."/>
            <person name="Brinkac L."/>
            <person name="Tan P."/>
            <person name="Nandi T."/>
            <person name="Crabtree J."/>
            <person name="Badger J."/>
            <person name="Beckstrom-Sternberg S."/>
            <person name="Saqib M."/>
            <person name="Schutzer S.E."/>
            <person name="Keim P."/>
            <person name="Nierman W.C."/>
        </authorList>
    </citation>
    <scope>NUCLEOTIDE SEQUENCE [LARGE SCALE GENOMIC DNA]</scope>
    <source>
        <strain>1710b</strain>
    </source>
</reference>
<evidence type="ECO:0000255" key="1">
    <source>
        <dbReference type="HAMAP-Rule" id="MF_00033"/>
    </source>
</evidence>
<dbReference type="EC" id="2.4.1.227" evidence="1"/>
<dbReference type="EMBL" id="CP000124">
    <property type="protein sequence ID" value="ABA50308.1"/>
    <property type="molecule type" value="Genomic_DNA"/>
</dbReference>
<dbReference type="RefSeq" id="WP_004527784.1">
    <property type="nucleotide sequence ID" value="NC_007434.1"/>
</dbReference>
<dbReference type="SMR" id="Q3JND8"/>
<dbReference type="CAZy" id="GT28">
    <property type="family name" value="Glycosyltransferase Family 28"/>
</dbReference>
<dbReference type="EnsemblBacteria" id="ABA50308">
    <property type="protein sequence ID" value="ABA50308"/>
    <property type="gene ID" value="BURPS1710b_3545"/>
</dbReference>
<dbReference type="KEGG" id="bpm:BURPS1710b_3545"/>
<dbReference type="HOGENOM" id="CLU_037404_2_0_4"/>
<dbReference type="UniPathway" id="UPA00219"/>
<dbReference type="Proteomes" id="UP000002700">
    <property type="component" value="Chromosome I"/>
</dbReference>
<dbReference type="GO" id="GO:0005886">
    <property type="term" value="C:plasma membrane"/>
    <property type="evidence" value="ECO:0007669"/>
    <property type="project" value="UniProtKB-SubCell"/>
</dbReference>
<dbReference type="GO" id="GO:0051991">
    <property type="term" value="F:UDP-N-acetyl-D-glucosamine:N-acetylmuramoyl-L-alanyl-D-glutamyl-meso-2,6-diaminopimelyl-D-alanyl-D-alanine-diphosphoundecaprenol 4-beta-N-acetylglucosaminlytransferase activity"/>
    <property type="evidence" value="ECO:0007669"/>
    <property type="project" value="RHEA"/>
</dbReference>
<dbReference type="GO" id="GO:0050511">
    <property type="term" value="F:undecaprenyldiphospho-muramoylpentapeptide beta-N-acetylglucosaminyltransferase activity"/>
    <property type="evidence" value="ECO:0007669"/>
    <property type="project" value="UniProtKB-UniRule"/>
</dbReference>
<dbReference type="GO" id="GO:0005975">
    <property type="term" value="P:carbohydrate metabolic process"/>
    <property type="evidence" value="ECO:0007669"/>
    <property type="project" value="InterPro"/>
</dbReference>
<dbReference type="GO" id="GO:0051301">
    <property type="term" value="P:cell division"/>
    <property type="evidence" value="ECO:0007669"/>
    <property type="project" value="UniProtKB-KW"/>
</dbReference>
<dbReference type="GO" id="GO:0071555">
    <property type="term" value="P:cell wall organization"/>
    <property type="evidence" value="ECO:0007669"/>
    <property type="project" value="UniProtKB-KW"/>
</dbReference>
<dbReference type="GO" id="GO:0030259">
    <property type="term" value="P:lipid glycosylation"/>
    <property type="evidence" value="ECO:0007669"/>
    <property type="project" value="UniProtKB-UniRule"/>
</dbReference>
<dbReference type="GO" id="GO:0009252">
    <property type="term" value="P:peptidoglycan biosynthetic process"/>
    <property type="evidence" value="ECO:0007669"/>
    <property type="project" value="UniProtKB-UniRule"/>
</dbReference>
<dbReference type="GO" id="GO:0008360">
    <property type="term" value="P:regulation of cell shape"/>
    <property type="evidence" value="ECO:0007669"/>
    <property type="project" value="UniProtKB-KW"/>
</dbReference>
<dbReference type="CDD" id="cd03785">
    <property type="entry name" value="GT28_MurG"/>
    <property type="match status" value="1"/>
</dbReference>
<dbReference type="Gene3D" id="3.40.50.2000">
    <property type="entry name" value="Glycogen Phosphorylase B"/>
    <property type="match status" value="2"/>
</dbReference>
<dbReference type="HAMAP" id="MF_00033">
    <property type="entry name" value="MurG"/>
    <property type="match status" value="1"/>
</dbReference>
<dbReference type="InterPro" id="IPR006009">
    <property type="entry name" value="GlcNAc_MurG"/>
</dbReference>
<dbReference type="InterPro" id="IPR007235">
    <property type="entry name" value="Glyco_trans_28_C"/>
</dbReference>
<dbReference type="InterPro" id="IPR004276">
    <property type="entry name" value="GlycoTrans_28_N"/>
</dbReference>
<dbReference type="NCBIfam" id="TIGR01133">
    <property type="entry name" value="murG"/>
    <property type="match status" value="1"/>
</dbReference>
<dbReference type="PANTHER" id="PTHR21015:SF22">
    <property type="entry name" value="GLYCOSYLTRANSFERASE"/>
    <property type="match status" value="1"/>
</dbReference>
<dbReference type="PANTHER" id="PTHR21015">
    <property type="entry name" value="UDP-N-ACETYLGLUCOSAMINE--N-ACETYLMURAMYL-(PENTAPEPTIDE) PYROPHOSPHORYL-UNDECAPRENOL N-ACETYLGLUCOSAMINE TRANSFERASE 1"/>
    <property type="match status" value="1"/>
</dbReference>
<dbReference type="Pfam" id="PF04101">
    <property type="entry name" value="Glyco_tran_28_C"/>
    <property type="match status" value="1"/>
</dbReference>
<dbReference type="Pfam" id="PF03033">
    <property type="entry name" value="Glyco_transf_28"/>
    <property type="match status" value="1"/>
</dbReference>
<dbReference type="SUPFAM" id="SSF53756">
    <property type="entry name" value="UDP-Glycosyltransferase/glycogen phosphorylase"/>
    <property type="match status" value="1"/>
</dbReference>
<keyword id="KW-0131">Cell cycle</keyword>
<keyword id="KW-0132">Cell division</keyword>
<keyword id="KW-0997">Cell inner membrane</keyword>
<keyword id="KW-1003">Cell membrane</keyword>
<keyword id="KW-0133">Cell shape</keyword>
<keyword id="KW-0961">Cell wall biogenesis/degradation</keyword>
<keyword id="KW-0328">Glycosyltransferase</keyword>
<keyword id="KW-0472">Membrane</keyword>
<keyword id="KW-0573">Peptidoglycan synthesis</keyword>
<keyword id="KW-0808">Transferase</keyword>
<proteinExistence type="inferred from homology"/>
<protein>
    <recommendedName>
        <fullName evidence="1">UDP-N-acetylglucosamine--N-acetylmuramyl-(pentapeptide) pyrophosphoryl-undecaprenol N-acetylglucosamine transferase</fullName>
        <ecNumber evidence="1">2.4.1.227</ecNumber>
    </recommendedName>
    <alternativeName>
        <fullName evidence="1">Undecaprenyl-PP-MurNAc-pentapeptide-UDPGlcNAc GlcNAc transferase</fullName>
    </alternativeName>
</protein>
<comment type="function">
    <text evidence="1">Cell wall formation. Catalyzes the transfer of a GlcNAc subunit on undecaprenyl-pyrophosphoryl-MurNAc-pentapeptide (lipid intermediate I) to form undecaprenyl-pyrophosphoryl-MurNAc-(pentapeptide)GlcNAc (lipid intermediate II).</text>
</comment>
<comment type="catalytic activity">
    <reaction evidence="1">
        <text>di-trans,octa-cis-undecaprenyl diphospho-N-acetyl-alpha-D-muramoyl-L-alanyl-D-glutamyl-meso-2,6-diaminopimeloyl-D-alanyl-D-alanine + UDP-N-acetyl-alpha-D-glucosamine = di-trans,octa-cis-undecaprenyl diphospho-[N-acetyl-alpha-D-glucosaminyl-(1-&gt;4)]-N-acetyl-alpha-D-muramoyl-L-alanyl-D-glutamyl-meso-2,6-diaminopimeloyl-D-alanyl-D-alanine + UDP + H(+)</text>
        <dbReference type="Rhea" id="RHEA:31227"/>
        <dbReference type="ChEBI" id="CHEBI:15378"/>
        <dbReference type="ChEBI" id="CHEBI:57705"/>
        <dbReference type="ChEBI" id="CHEBI:58223"/>
        <dbReference type="ChEBI" id="CHEBI:61387"/>
        <dbReference type="ChEBI" id="CHEBI:61388"/>
        <dbReference type="EC" id="2.4.1.227"/>
    </reaction>
</comment>
<comment type="pathway">
    <text evidence="1">Cell wall biogenesis; peptidoglycan biosynthesis.</text>
</comment>
<comment type="subcellular location">
    <subcellularLocation>
        <location evidence="1">Cell inner membrane</location>
        <topology evidence="1">Peripheral membrane protein</topology>
        <orientation evidence="1">Cytoplasmic side</orientation>
    </subcellularLocation>
</comment>
<comment type="similarity">
    <text evidence="1">Belongs to the glycosyltransferase 28 family. MurG subfamily.</text>
</comment>
<accession>Q3JND8</accession>
<gene>
    <name evidence="1" type="primary">murG</name>
    <name type="ordered locus">BURPS1710b_3545</name>
</gene>
<sequence>MTSTQRTLMVMAGGTGGHVFPGLAVAHRMQAQGWRVVWLGNPAGMEATLVPRHGIPMEYVHFGGLRGKGLATKFALPFNLLRACAQSLRALRRVKPDVVLGMGGYITFPAGLVTVLTGRPLVLHEQNSIAGLTNKVLAKLAKRVLVAFPGALPNAEWTGNPIRTELARTEPPQARYAARSGKLRLLVVGGSLGAAALNEVVPRALALLAPDERPQVVHQAGAKHIDTLKENYEAAGLSCGSDVALVPFIDDMASAYANADLVICRSGAMTVAEIAAVGVAALFVPFPHAVDDHQTTNAEFLAEQGAAVLVQQRDLSAELLADWLRGQSRDSLAAMAERSRSLAKPDATDEVARVCAAVAGANLEGKQ</sequence>